<dbReference type="EMBL" id="AF107889">
    <property type="protein sequence ID" value="AAD16971.1"/>
    <property type="molecule type" value="mRNA"/>
</dbReference>
<dbReference type="EMBL" id="BC097507">
    <property type="protein sequence ID" value="AAH97507.1"/>
    <property type="molecule type" value="mRNA"/>
</dbReference>
<dbReference type="RefSeq" id="NP_001081864.1">
    <property type="nucleotide sequence ID" value="NM_001088395.1"/>
</dbReference>
<dbReference type="SMR" id="Q9YGP5"/>
<dbReference type="DNASU" id="398092"/>
<dbReference type="GeneID" id="398092"/>
<dbReference type="KEGG" id="xla:398092"/>
<dbReference type="AGR" id="Xenbase:XB-GENE-17342697"/>
<dbReference type="CTD" id="398092"/>
<dbReference type="Xenbase" id="XB-GENE-17342697">
    <property type="gene designation" value="rbpms2.S"/>
</dbReference>
<dbReference type="OMA" id="AQQGWKY"/>
<dbReference type="OrthoDB" id="431169at2759"/>
<dbReference type="Proteomes" id="UP000186698">
    <property type="component" value="Chromosome 3S"/>
</dbReference>
<dbReference type="GO" id="GO:0005737">
    <property type="term" value="C:cytoplasm"/>
    <property type="evidence" value="ECO:0000250"/>
    <property type="project" value="UniProtKB"/>
</dbReference>
<dbReference type="GO" id="GO:0010494">
    <property type="term" value="C:cytoplasmic stress granule"/>
    <property type="evidence" value="ECO:0000250"/>
    <property type="project" value="UniProtKB"/>
</dbReference>
<dbReference type="GO" id="GO:0005829">
    <property type="term" value="C:cytosol"/>
    <property type="evidence" value="ECO:0000250"/>
    <property type="project" value="UniProtKB"/>
</dbReference>
<dbReference type="GO" id="GO:0005634">
    <property type="term" value="C:nucleus"/>
    <property type="evidence" value="ECO:0000250"/>
    <property type="project" value="UniProtKB"/>
</dbReference>
<dbReference type="GO" id="GO:0003729">
    <property type="term" value="F:mRNA binding"/>
    <property type="evidence" value="ECO:0000318"/>
    <property type="project" value="GO_Central"/>
</dbReference>
<dbReference type="GO" id="GO:0042803">
    <property type="term" value="F:protein homodimerization activity"/>
    <property type="evidence" value="ECO:0007669"/>
    <property type="project" value="InterPro"/>
</dbReference>
<dbReference type="GO" id="GO:0003713">
    <property type="term" value="F:transcription coactivator activity"/>
    <property type="evidence" value="ECO:0000250"/>
    <property type="project" value="UniProtKB"/>
</dbReference>
<dbReference type="GO" id="GO:0048557">
    <property type="term" value="P:embryonic digestive tract morphogenesis"/>
    <property type="evidence" value="ECO:0000250"/>
    <property type="project" value="UniProtKB"/>
</dbReference>
<dbReference type="GO" id="GO:0030514">
    <property type="term" value="P:negative regulation of BMP signaling pathway"/>
    <property type="evidence" value="ECO:0000250"/>
    <property type="project" value="UniProtKB"/>
</dbReference>
<dbReference type="GO" id="GO:0051151">
    <property type="term" value="P:negative regulation of smooth muscle cell differentiation"/>
    <property type="evidence" value="ECO:0000250"/>
    <property type="project" value="UniProtKB"/>
</dbReference>
<dbReference type="GO" id="GO:0048661">
    <property type="term" value="P:positive regulation of smooth muscle cell proliferation"/>
    <property type="evidence" value="ECO:0000250"/>
    <property type="project" value="UniProtKB"/>
</dbReference>
<dbReference type="GO" id="GO:0000381">
    <property type="term" value="P:regulation of alternative mRNA splicing, via spliceosome"/>
    <property type="evidence" value="ECO:0000250"/>
    <property type="project" value="UniProtKB"/>
</dbReference>
<dbReference type="GO" id="GO:0060395">
    <property type="term" value="P:SMAD protein signal transduction"/>
    <property type="evidence" value="ECO:0000250"/>
    <property type="project" value="UniProtKB"/>
</dbReference>
<dbReference type="CDD" id="cd12683">
    <property type="entry name" value="RRM_RBPMS2"/>
    <property type="match status" value="1"/>
</dbReference>
<dbReference type="FunFam" id="3.30.70.330:FF:000037">
    <property type="entry name" value="RNA-binding protein with multiple splicing 2"/>
    <property type="match status" value="1"/>
</dbReference>
<dbReference type="Gene3D" id="3.30.70.330">
    <property type="match status" value="1"/>
</dbReference>
<dbReference type="InterPro" id="IPR012677">
    <property type="entry name" value="Nucleotide-bd_a/b_plait_sf"/>
</dbReference>
<dbReference type="InterPro" id="IPR035979">
    <property type="entry name" value="RBD_domain_sf"/>
</dbReference>
<dbReference type="InterPro" id="IPR034787">
    <property type="entry name" value="RBPMS2_RRM"/>
</dbReference>
<dbReference type="InterPro" id="IPR000504">
    <property type="entry name" value="RRM_dom"/>
</dbReference>
<dbReference type="PANTHER" id="PTHR10501">
    <property type="entry name" value="U1 SMALL NUCLEAR RIBONUCLEOPROTEIN A/U2 SMALL NUCLEAR RIBONUCLEOPROTEIN B"/>
    <property type="match status" value="1"/>
</dbReference>
<dbReference type="Pfam" id="PF00076">
    <property type="entry name" value="RRM_1"/>
    <property type="match status" value="1"/>
</dbReference>
<dbReference type="SMART" id="SM00360">
    <property type="entry name" value="RRM"/>
    <property type="match status" value="1"/>
</dbReference>
<dbReference type="SUPFAM" id="SSF54928">
    <property type="entry name" value="RNA-binding domain, RBD"/>
    <property type="match status" value="1"/>
</dbReference>
<dbReference type="PROSITE" id="PS50102">
    <property type="entry name" value="RRM"/>
    <property type="match status" value="1"/>
</dbReference>
<sequence length="196" mass="21676">MSGIKSDTEHNNNNIEEEVRTLFVSGLPIDIKPRELYLLFRPFKGYEGSLIKLTSKQPVGFVTFDNRAGAEAAKNALNGIRFDPENPQTLRLEFAKANTKMAKNKLMATPNPTNFHPALGAHFIARDPYDFTGAALIPASPEAWAPYPLYTAELAPAIPHAAFTYPAAAAAALHAQMRWYPPSEATQQGWKSRQFC</sequence>
<protein>
    <recommendedName>
        <fullName>RNA-binding protein with multiple splicing 2</fullName>
    </recommendedName>
    <alternativeName>
        <fullName evidence="6">Heart and RRM expressed sequence</fullName>
        <shortName evidence="6">Hermes</shortName>
    </alternativeName>
</protein>
<accession>Q9YGP5</accession>
<accession>Q4V877</accession>
<gene>
    <name evidence="7" type="primary">rbpms2</name>
    <name evidence="6" type="synonym">hermes</name>
</gene>
<name>RBPS2_XENLA</name>
<proteinExistence type="evidence at transcript level"/>
<comment type="function">
    <text evidence="1 2 3">RNA-binding protein involved in the regulation of smooth muscle cell differentiation and proliferation in the gastrointestinal system (By similarity). Binds NOG mRNA, the major inhibitor of the bone morphogenetic protein (BMP) pathway. Mediates an increase of NOG mRNA levels, thereby contributing to the negative regulation of BMP signaling pathway and promoting reversible dedifferentiation and proliferation of smooth muscle cells (By similarity). Acts as a pre-mRNA alternative splicing regulator. Mediates ACTN1 and FLNB alternative splicing (By similarity). Likely binds to mRNA tandem CAC trinucleotide or CA dinucleotide motifs (By similarity).</text>
</comment>
<comment type="subunit">
    <text evidence="3">Homodimer.</text>
</comment>
<comment type="subcellular location">
    <subcellularLocation>
        <location evidence="2">Cytoplasm</location>
    </subcellularLocation>
    <subcellularLocation>
        <location evidence="2">Nucleus</location>
    </subcellularLocation>
    <subcellularLocation>
        <location evidence="2">Cytoplasm</location>
        <location evidence="2">Stress granule</location>
    </subcellularLocation>
</comment>
<comment type="tissue specificity">
    <text evidence="5">Expressed in developing heart, pronephros, retina and epiphysis. In adult, high expression in heart, moderate in kidney, undetectable in liver, lung and skeletal muscle.</text>
</comment>
<comment type="developmental stage">
    <text evidence="5">mRNA first detected in the tailbud embryo (stage 26) in the paired heart primordia and in the condensing epithelium that will form the pronephros; at the late tailbud stage (stage 34) in the developing retina and epiphysis. As development proceeds, detected through the entire length of the heart tube, in the muscular tissue of the outflow tract, and in the duct epithelium of the pronephros. During later development, mRNA found in all subregions of the heart, in the glomus, tubules and duct of the pronephros, in the retinal ganglion cell layer (gcl) and in the epiphysis.</text>
</comment>
<comment type="domain">
    <text evidence="2">The RNA recognition motif (RRM) domain mediates binding to tandem CAC trinucleotide motif separated by a variable spacer region present on single-stranded RNA. Can also bind to CA dinucleotide repeats.</text>
</comment>
<feature type="chain" id="PRO_0000081796" description="RNA-binding protein with multiple splicing 2">
    <location>
        <begin position="1"/>
        <end position="196"/>
    </location>
</feature>
<feature type="domain" description="RRM" evidence="4">
    <location>
        <begin position="20"/>
        <end position="97"/>
    </location>
</feature>
<feature type="region of interest" description="Important for homodimerization" evidence="2">
    <location>
        <begin position="30"/>
        <end position="40"/>
    </location>
</feature>
<reference key="1">
    <citation type="journal article" date="1999" name="Mech. Dev.">
        <title>The RNA-binding protein gene, hermes, is expressed at high levels in the developing heart.</title>
        <authorList>
            <person name="Gerber W.V."/>
            <person name="Yatskievych T.A."/>
            <person name="Antin P.B."/>
            <person name="Correia K.M."/>
            <person name="Conlon R.A."/>
            <person name="Krieg P.A."/>
        </authorList>
    </citation>
    <scope>NUCLEOTIDE SEQUENCE [MRNA]</scope>
    <scope>TISSUE SPECIFICITY</scope>
    <scope>DEVELOPMENTAL STAGE</scope>
    <source>
        <tissue>Heart</tissue>
    </source>
</reference>
<reference key="2">
    <citation type="submission" date="2005-06" db="EMBL/GenBank/DDBJ databases">
        <authorList>
            <consortium name="NIH - Xenopus Gene Collection (XGC) project"/>
        </authorList>
    </citation>
    <scope>NUCLEOTIDE SEQUENCE [LARGE SCALE MRNA]</scope>
    <source>
        <tissue>Ovary</tissue>
    </source>
</reference>
<keyword id="KW-0963">Cytoplasm</keyword>
<keyword id="KW-0217">Developmental protein</keyword>
<keyword id="KW-0539">Nucleus</keyword>
<keyword id="KW-1185">Reference proteome</keyword>
<keyword id="KW-0694">RNA-binding</keyword>
<evidence type="ECO:0000250" key="1">
    <source>
        <dbReference type="UniProtKB" id="B5DFF2"/>
    </source>
</evidence>
<evidence type="ECO:0000250" key="2">
    <source>
        <dbReference type="UniProtKB" id="Q6ZRY4"/>
    </source>
</evidence>
<evidence type="ECO:0000250" key="3">
    <source>
        <dbReference type="UniProtKB" id="Q9W6I1"/>
    </source>
</evidence>
<evidence type="ECO:0000255" key="4">
    <source>
        <dbReference type="PROSITE-ProRule" id="PRU00176"/>
    </source>
</evidence>
<evidence type="ECO:0000269" key="5">
    <source>
    </source>
</evidence>
<evidence type="ECO:0000303" key="6">
    <source>
    </source>
</evidence>
<evidence type="ECO:0000305" key="7"/>
<organism>
    <name type="scientific">Xenopus laevis</name>
    <name type="common">African clawed frog</name>
    <dbReference type="NCBI Taxonomy" id="8355"/>
    <lineage>
        <taxon>Eukaryota</taxon>
        <taxon>Metazoa</taxon>
        <taxon>Chordata</taxon>
        <taxon>Craniata</taxon>
        <taxon>Vertebrata</taxon>
        <taxon>Euteleostomi</taxon>
        <taxon>Amphibia</taxon>
        <taxon>Batrachia</taxon>
        <taxon>Anura</taxon>
        <taxon>Pipoidea</taxon>
        <taxon>Pipidae</taxon>
        <taxon>Xenopodinae</taxon>
        <taxon>Xenopus</taxon>
        <taxon>Xenopus</taxon>
    </lineage>
</organism>